<comment type="function">
    <text evidence="2 3">Nuclear receptor that binds peroxisome proliferators such as hypolipidemic drugs and fatty acids. Once activated by a ligand, the nuclear receptor binds to DNA specific PPAR response elements (PPRE) and modulates the transcription of its target genes, such as acyl-CoA oxidase. It therefore controls the peroxisomal beta-oxidation pathway of fatty acids. Key regulator of adipocyte differentiation and glucose homeostasis. ARF6 acts as a key regulator of the tissue-specific adipocyte P2 (aP2) enhancer. Acts as a critical regulator of gut homeostasis by suppressing NF-kappa-B-mediated pro-inflammatory responses. Plays a role in the regulation of cardiovascular circadian rhythms by regulating the transcription of BMAL1 in the blood vessels.</text>
</comment>
<comment type="activity regulation">
    <text evidence="1">PDPK1 activates its transcriptional activity independently of its kinase activity.</text>
</comment>
<comment type="subunit">
    <text evidence="2 3">Interacts with FOXO1 (acetylated form) (By similarity). Heterodimer with other nuclear receptors, such as RXRA. The heterodimer with the retinoic acid receptor RXRA is called adipocyte-specific transcription factor ARF6. Interacts with NCOA6 coactivator, leading to a strong increase in transcription of target genes. Interacts with coactivator PPARBP, leading to a mild increase in transcription of target genes. Interacts with NOCA7 in a ligand-inducible manner. Interacts with NCOA1 and NCOA2 LXXLL motifs. Interacts with ASXL1, ASXL2, DNTTIP2, FAM120B, MAP2K1/MEK1, NR0B2, PDPK1, PRDM16, PRMT2 and TGFB1I1. Interacts (when activated by agonist) with PPP5C. Interacts with HELZ2 and THRAP3; the interaction stimulates the transcriptional activity of PPARG. Interacts with PER2, the interaction is ligand dependent and blocks PPARG recruitment to target promoters. Interacts with NOCT. Interacts with ACTN4. Interacts (when in the liganded conformation) with GPS2 (By similarity). Interacts with CRY1 and CRY2 in a ligand-dependent manner (By similarity). In the absence of hormonal ligand, interacts with TACC1 (By similarity). In macrophages, interacts with PAQR3 and STUB1; the interactions promote PPARG poylubiquitination and STUB1-mediated degradation (By similarity).</text>
</comment>
<comment type="subcellular location">
    <subcellularLocation>
        <location evidence="4">Nucleus</location>
    </subcellularLocation>
    <subcellularLocation>
        <location evidence="1">Cytoplasm</location>
    </subcellularLocation>
    <text evidence="1">Redistributed from the nucleus to the cytosol through a MAP2K1/MEK1-dependent manner. NOCT enhances its nuclear translocation (By similarity).</text>
</comment>
<comment type="domain">
    <text evidence="2">The 9aaTAD motif is a transactivation domain present in a large number of yeast and animal transcription factors.</text>
</comment>
<comment type="PTM">
    <text evidence="2">Phosphorylated at basal conditions and dephosphorylated when treated with the ligand. May be dephosphorylated by PPP5C. The phosphorylated form may be inactive and dephosphorylation induces adipogenic activity (By similarity).</text>
</comment>
<comment type="PTM">
    <text evidence="2 3">Ubiquitinated by E3 ubiquitin-protein ligase complex containing FBXO9; leading to proteasomal degradation (By similarity). Ubiquitinated at Lys-222 by TRIM55 leading to proteasomal degradation (By similarity). Ubiquitinated by E3 ubiquitin-protein ligase STUB1/CHIP; leading to proteasomal degradation (By similarity).</text>
</comment>
<comment type="similarity">
    <text evidence="6">Belongs to the nuclear hormone receptor family. NR1 subfamily.</text>
</comment>
<protein>
    <recommendedName>
        <fullName>Peroxisome proliferator-activated receptor gamma</fullName>
        <shortName>PPAR-gamma</shortName>
    </recommendedName>
    <alternativeName>
        <fullName>Nuclear receptor subfamily 1 group C member 3</fullName>
    </alternativeName>
</protein>
<name>PPARG_RABIT</name>
<gene>
    <name type="primary">PPARG</name>
    <name type="synonym">NR1C3</name>
</gene>
<feature type="chain" id="PRO_0000053496" description="Peroxisome proliferator-activated receptor gamma">
    <location>
        <begin position="1"/>
        <end position="475"/>
    </location>
</feature>
<feature type="domain" description="NR LBD" evidence="5">
    <location>
        <begin position="208"/>
        <end position="473"/>
    </location>
</feature>
<feature type="DNA-binding region" description="Nuclear receptor" evidence="4">
    <location>
        <begin position="106"/>
        <end position="180"/>
    </location>
</feature>
<feature type="zinc finger region" description="NR C4-type" evidence="4">
    <location>
        <begin position="109"/>
        <end position="129"/>
    </location>
</feature>
<feature type="zinc finger region" description="NR C4-type" evidence="4">
    <location>
        <begin position="146"/>
        <end position="168"/>
    </location>
</feature>
<feature type="region of interest" description="Interaction with FAM120B" evidence="1">
    <location>
        <begin position="175"/>
        <end position="250"/>
    </location>
</feature>
<feature type="short sequence motif" description="9aaTAD" evidence="2">
    <location>
        <begin position="465"/>
        <end position="473"/>
    </location>
</feature>
<feature type="modified residue" description="Phosphoserine; by MAPK" evidence="3">
    <location>
        <position position="82"/>
    </location>
</feature>
<feature type="cross-link" description="Glycyl lysine isopeptide (Lys-Gly) (interchain with G-Cter in ubiquitin)" evidence="2">
    <location>
        <position position="222"/>
    </location>
</feature>
<evidence type="ECO:0000250" key="1"/>
<evidence type="ECO:0000250" key="2">
    <source>
        <dbReference type="UniProtKB" id="P37231"/>
    </source>
</evidence>
<evidence type="ECO:0000250" key="3">
    <source>
        <dbReference type="UniProtKB" id="P37238"/>
    </source>
</evidence>
<evidence type="ECO:0000255" key="4">
    <source>
        <dbReference type="PROSITE-ProRule" id="PRU00407"/>
    </source>
</evidence>
<evidence type="ECO:0000255" key="5">
    <source>
        <dbReference type="PROSITE-ProRule" id="PRU01189"/>
    </source>
</evidence>
<evidence type="ECO:0000305" key="6"/>
<keyword id="KW-0010">Activator</keyword>
<keyword id="KW-0090">Biological rhythms</keyword>
<keyword id="KW-0963">Cytoplasm</keyword>
<keyword id="KW-0238">DNA-binding</keyword>
<keyword id="KW-1017">Isopeptide bond</keyword>
<keyword id="KW-0479">Metal-binding</keyword>
<keyword id="KW-0539">Nucleus</keyword>
<keyword id="KW-0597">Phosphoprotein</keyword>
<keyword id="KW-0675">Receptor</keyword>
<keyword id="KW-1185">Reference proteome</keyword>
<keyword id="KW-0804">Transcription</keyword>
<keyword id="KW-0805">Transcription regulation</keyword>
<keyword id="KW-0832">Ubl conjugation</keyword>
<keyword id="KW-0862">Zinc</keyword>
<keyword id="KW-0863">Zinc-finger</keyword>
<proteinExistence type="evidence at transcript level"/>
<organism>
    <name type="scientific">Oryctolagus cuniculus</name>
    <name type="common">Rabbit</name>
    <dbReference type="NCBI Taxonomy" id="9986"/>
    <lineage>
        <taxon>Eukaryota</taxon>
        <taxon>Metazoa</taxon>
        <taxon>Chordata</taxon>
        <taxon>Craniata</taxon>
        <taxon>Vertebrata</taxon>
        <taxon>Euteleostomi</taxon>
        <taxon>Mammalia</taxon>
        <taxon>Eutheria</taxon>
        <taxon>Euarchontoglires</taxon>
        <taxon>Glires</taxon>
        <taxon>Lagomorpha</taxon>
        <taxon>Leporidae</taxon>
        <taxon>Oryctolagus</taxon>
    </lineage>
</organism>
<accession>O19052</accession>
<dbReference type="EMBL" id="U84893">
    <property type="protein sequence ID" value="AAB96380.1"/>
    <property type="molecule type" value="mRNA"/>
</dbReference>
<dbReference type="BMRB" id="O19052"/>
<dbReference type="SMR" id="O19052"/>
<dbReference type="STRING" id="9986.ENSOCUP00000043929"/>
<dbReference type="PaxDb" id="9986-ENSOCUP00000018424"/>
<dbReference type="eggNOG" id="KOG3575">
    <property type="taxonomic scope" value="Eukaryota"/>
</dbReference>
<dbReference type="InParanoid" id="O19052"/>
<dbReference type="Proteomes" id="UP000001811">
    <property type="component" value="Unplaced"/>
</dbReference>
<dbReference type="GO" id="GO:0005737">
    <property type="term" value="C:cytoplasm"/>
    <property type="evidence" value="ECO:0007669"/>
    <property type="project" value="UniProtKB-SubCell"/>
</dbReference>
<dbReference type="GO" id="GO:0005634">
    <property type="term" value="C:nucleus"/>
    <property type="evidence" value="ECO:0007669"/>
    <property type="project" value="UniProtKB-SubCell"/>
</dbReference>
<dbReference type="GO" id="GO:0003682">
    <property type="term" value="F:chromatin binding"/>
    <property type="evidence" value="ECO:0000250"/>
    <property type="project" value="UniProtKB"/>
</dbReference>
<dbReference type="GO" id="GO:0003700">
    <property type="term" value="F:DNA-binding transcription factor activity"/>
    <property type="evidence" value="ECO:0000250"/>
    <property type="project" value="UniProtKB"/>
</dbReference>
<dbReference type="GO" id="GO:0001227">
    <property type="term" value="F:DNA-binding transcription repressor activity, RNA polymerase II-specific"/>
    <property type="evidence" value="ECO:0007669"/>
    <property type="project" value="TreeGrafter"/>
</dbReference>
<dbReference type="GO" id="GO:0070888">
    <property type="term" value="F:E-box binding"/>
    <property type="evidence" value="ECO:0000250"/>
    <property type="project" value="UniProtKB"/>
</dbReference>
<dbReference type="GO" id="GO:0004879">
    <property type="term" value="F:nuclear receptor activity"/>
    <property type="evidence" value="ECO:0000250"/>
    <property type="project" value="UniProtKB"/>
</dbReference>
<dbReference type="GO" id="GO:0000976">
    <property type="term" value="F:transcription cis-regulatory region binding"/>
    <property type="evidence" value="ECO:0000250"/>
    <property type="project" value="UniProtKB"/>
</dbReference>
<dbReference type="GO" id="GO:0008270">
    <property type="term" value="F:zinc ion binding"/>
    <property type="evidence" value="ECO:0007669"/>
    <property type="project" value="UniProtKB-KW"/>
</dbReference>
<dbReference type="GO" id="GO:0030154">
    <property type="term" value="P:cell differentiation"/>
    <property type="evidence" value="ECO:0007669"/>
    <property type="project" value="TreeGrafter"/>
</dbReference>
<dbReference type="GO" id="GO:0032869">
    <property type="term" value="P:cellular response to insulin stimulus"/>
    <property type="evidence" value="ECO:0000250"/>
    <property type="project" value="UniProtKB"/>
</dbReference>
<dbReference type="GO" id="GO:0006631">
    <property type="term" value="P:fatty acid metabolic process"/>
    <property type="evidence" value="ECO:0007669"/>
    <property type="project" value="TreeGrafter"/>
</dbReference>
<dbReference type="GO" id="GO:0010887">
    <property type="term" value="P:negative regulation of cholesterol storage"/>
    <property type="evidence" value="ECO:0007669"/>
    <property type="project" value="TreeGrafter"/>
</dbReference>
<dbReference type="GO" id="GO:0050728">
    <property type="term" value="P:negative regulation of inflammatory response"/>
    <property type="evidence" value="ECO:0007669"/>
    <property type="project" value="TreeGrafter"/>
</dbReference>
<dbReference type="GO" id="GO:0035357">
    <property type="term" value="P:peroxisome proliferator activated receptor signaling pathway"/>
    <property type="evidence" value="ECO:0000250"/>
    <property type="project" value="UniProtKB"/>
</dbReference>
<dbReference type="GO" id="GO:0045893">
    <property type="term" value="P:positive regulation of DNA-templated transcription"/>
    <property type="evidence" value="ECO:0000250"/>
    <property type="project" value="UniProtKB"/>
</dbReference>
<dbReference type="GO" id="GO:0045600">
    <property type="term" value="P:positive regulation of fat cell differentiation"/>
    <property type="evidence" value="ECO:0000250"/>
    <property type="project" value="UniProtKB"/>
</dbReference>
<dbReference type="GO" id="GO:0045923">
    <property type="term" value="P:positive regulation of fatty acid metabolic process"/>
    <property type="evidence" value="ECO:0007669"/>
    <property type="project" value="TreeGrafter"/>
</dbReference>
<dbReference type="GO" id="GO:0045944">
    <property type="term" value="P:positive regulation of transcription by RNA polymerase II"/>
    <property type="evidence" value="ECO:0000250"/>
    <property type="project" value="UniProtKB"/>
</dbReference>
<dbReference type="GO" id="GO:0042752">
    <property type="term" value="P:regulation of circadian rhythm"/>
    <property type="evidence" value="ECO:0000250"/>
    <property type="project" value="UniProtKB"/>
</dbReference>
<dbReference type="GO" id="GO:0006355">
    <property type="term" value="P:regulation of DNA-templated transcription"/>
    <property type="evidence" value="ECO:0000250"/>
    <property type="project" value="UniProtKB"/>
</dbReference>
<dbReference type="GO" id="GO:0006357">
    <property type="term" value="P:regulation of transcription by RNA polymerase II"/>
    <property type="evidence" value="ECO:0000250"/>
    <property type="project" value="UniProtKB"/>
</dbReference>
<dbReference type="GO" id="GO:0048384">
    <property type="term" value="P:retinoic acid receptor signaling pathway"/>
    <property type="evidence" value="ECO:0000250"/>
    <property type="project" value="UniProtKB"/>
</dbReference>
<dbReference type="GO" id="GO:0048511">
    <property type="term" value="P:rhythmic process"/>
    <property type="evidence" value="ECO:0007669"/>
    <property type="project" value="UniProtKB-KW"/>
</dbReference>
<dbReference type="CDD" id="cd06965">
    <property type="entry name" value="NR_DBD_Ppar"/>
    <property type="match status" value="1"/>
</dbReference>
<dbReference type="CDD" id="cd06932">
    <property type="entry name" value="NR_LBD_PPAR"/>
    <property type="match status" value="1"/>
</dbReference>
<dbReference type="FunFam" id="1.10.565.10:FF:000017">
    <property type="entry name" value="Peroxisome proliferator-activated receptor gamma"/>
    <property type="match status" value="1"/>
</dbReference>
<dbReference type="FunFam" id="3.30.50.10:FF:000010">
    <property type="entry name" value="Peroxisome proliferator-activated receptor gamma"/>
    <property type="match status" value="1"/>
</dbReference>
<dbReference type="Gene3D" id="3.30.50.10">
    <property type="entry name" value="Erythroid Transcription Factor GATA-1, subunit A"/>
    <property type="match status" value="1"/>
</dbReference>
<dbReference type="Gene3D" id="1.10.565.10">
    <property type="entry name" value="Retinoid X Receptor"/>
    <property type="match status" value="1"/>
</dbReference>
<dbReference type="InterPro" id="IPR003074">
    <property type="entry name" value="1Cnucl_rcpt"/>
</dbReference>
<dbReference type="InterPro" id="IPR035500">
    <property type="entry name" value="NHR-like_dom_sf"/>
</dbReference>
<dbReference type="InterPro" id="IPR000536">
    <property type="entry name" value="Nucl_hrmn_rcpt_lig-bd"/>
</dbReference>
<dbReference type="InterPro" id="IPR050234">
    <property type="entry name" value="Nuclear_hormone_rcpt_NR1"/>
</dbReference>
<dbReference type="InterPro" id="IPR001723">
    <property type="entry name" value="Nuclear_hrmn_rcpt"/>
</dbReference>
<dbReference type="InterPro" id="IPR003077">
    <property type="entry name" value="PPAR-gamma"/>
</dbReference>
<dbReference type="InterPro" id="IPR022590">
    <property type="entry name" value="PPARgamma_N"/>
</dbReference>
<dbReference type="InterPro" id="IPR001628">
    <property type="entry name" value="Znf_hrmn_rcpt"/>
</dbReference>
<dbReference type="InterPro" id="IPR013088">
    <property type="entry name" value="Znf_NHR/GATA"/>
</dbReference>
<dbReference type="PANTHER" id="PTHR24082">
    <property type="entry name" value="NUCLEAR HORMONE RECEPTOR"/>
    <property type="match status" value="1"/>
</dbReference>
<dbReference type="PANTHER" id="PTHR24082:SF488">
    <property type="entry name" value="PEROXISOME PROLIFERATOR-ACTIVATED RECEPTOR GAMMA"/>
    <property type="match status" value="1"/>
</dbReference>
<dbReference type="Pfam" id="PF00104">
    <property type="entry name" value="Hormone_recep"/>
    <property type="match status" value="1"/>
</dbReference>
<dbReference type="Pfam" id="PF12577">
    <property type="entry name" value="PPARgamma_N"/>
    <property type="match status" value="1"/>
</dbReference>
<dbReference type="Pfam" id="PF00105">
    <property type="entry name" value="zf-C4"/>
    <property type="match status" value="1"/>
</dbReference>
<dbReference type="PRINTS" id="PR01288">
    <property type="entry name" value="PROXISOMEPAR"/>
</dbReference>
<dbReference type="PRINTS" id="PR01291">
    <property type="entry name" value="PROXISOMPAGR"/>
</dbReference>
<dbReference type="PRINTS" id="PR00398">
    <property type="entry name" value="STRDHORMONER"/>
</dbReference>
<dbReference type="PRINTS" id="PR00047">
    <property type="entry name" value="STROIDFINGER"/>
</dbReference>
<dbReference type="SMART" id="SM00430">
    <property type="entry name" value="HOLI"/>
    <property type="match status" value="1"/>
</dbReference>
<dbReference type="SMART" id="SM00399">
    <property type="entry name" value="ZnF_C4"/>
    <property type="match status" value="1"/>
</dbReference>
<dbReference type="SUPFAM" id="SSF57716">
    <property type="entry name" value="Glucocorticoid receptor-like (DNA-binding domain)"/>
    <property type="match status" value="1"/>
</dbReference>
<dbReference type="SUPFAM" id="SSF48508">
    <property type="entry name" value="Nuclear receptor ligand-binding domain"/>
    <property type="match status" value="1"/>
</dbReference>
<dbReference type="PROSITE" id="PS51843">
    <property type="entry name" value="NR_LBD"/>
    <property type="match status" value="1"/>
</dbReference>
<dbReference type="PROSITE" id="PS00031">
    <property type="entry name" value="NUCLEAR_REC_DBD_1"/>
    <property type="match status" value="1"/>
</dbReference>
<dbReference type="PROSITE" id="PS51030">
    <property type="entry name" value="NUCLEAR_REC_DBD_2"/>
    <property type="match status" value="1"/>
</dbReference>
<reference key="1">
    <citation type="journal article" date="1997" name="Endocrinology">
        <title>Peroxisome proliferator-activated receptor gamma1 expression is induced during cyclic adenosine monophosphate-stimulated differentiation of alveolar type II pneumonocytes.</title>
        <authorList>
            <person name="Michael L.F."/>
            <person name="Lazar M.A."/>
            <person name="Mendelson C.R."/>
        </authorList>
    </citation>
    <scope>NUCLEOTIDE SEQUENCE [MRNA]</scope>
    <source>
        <strain>New Zealand white</strain>
    </source>
</reference>
<sequence>MVDTEMPFWPTNFGIGSVDLSVMDDHSHSFDIKPFTTVDFSSISAPHYEDLPFARADPMVADYKYDLKLQEYQSAIKVEPASPPYYSEKTQLYNKTHEEPSNSLMAIECRVCSDKASGFHYGVHACEGCKGFFRRTIRLKLIYDRCDLNCRIHKKSRNKCQYCRFQKCLAVGMSHNAIRFGRMPQAEKEKLLAEISSDIDQLNPESADLRALAKHLYDSYIKSFPLTKAKARAILTGKTTDKSPFVIYDMNSLMMGEDKIKFKHITPLQEQSKEVAIRIFQGCQFRSVEAVQEITEYAKNIPGFVSLDLNDQVTLLKYGVHEIIYTMLASLMNKDGVLISEGQGFMTREFLKSLRKPFGDFMEPKFEFAVKFNALELDDSDLAIFIAVIILSGDRPGLLNVKPIEDIQDNLLQALELQLKLNHPEASQLFAKLLQKMTDLRQIVTEHVQLLQVIKKTETDMSLHPLLQEIYKDLY</sequence>